<gene>
    <name evidence="1" type="primary">dinG</name>
    <name type="ordered locus">c0883</name>
</gene>
<reference key="1">
    <citation type="journal article" date="2002" name="Proc. Natl. Acad. Sci. U.S.A.">
        <title>Extensive mosaic structure revealed by the complete genome sequence of uropathogenic Escherichia coli.</title>
        <authorList>
            <person name="Welch R.A."/>
            <person name="Burland V."/>
            <person name="Plunkett G. III"/>
            <person name="Redford P."/>
            <person name="Roesch P."/>
            <person name="Rasko D."/>
            <person name="Buckles E.L."/>
            <person name="Liou S.-R."/>
            <person name="Boutin A."/>
            <person name="Hackett J."/>
            <person name="Stroud D."/>
            <person name="Mayhew G.F."/>
            <person name="Rose D.J."/>
            <person name="Zhou S."/>
            <person name="Schwartz D.C."/>
            <person name="Perna N.T."/>
            <person name="Mobley H.L.T."/>
            <person name="Donnenberg M.S."/>
            <person name="Blattner F.R."/>
        </authorList>
    </citation>
    <scope>NUCLEOTIDE SEQUENCE [LARGE SCALE GENOMIC DNA]</scope>
    <source>
        <strain>CFT073 / ATCC 700928 / UPEC</strain>
    </source>
</reference>
<keyword id="KW-0004">4Fe-4S</keyword>
<keyword id="KW-0067">ATP-binding</keyword>
<keyword id="KW-0238">DNA-binding</keyword>
<keyword id="KW-0347">Helicase</keyword>
<keyword id="KW-0378">Hydrolase</keyword>
<keyword id="KW-0408">Iron</keyword>
<keyword id="KW-0411">Iron-sulfur</keyword>
<keyword id="KW-0413">Isomerase</keyword>
<keyword id="KW-0479">Metal-binding</keyword>
<keyword id="KW-0547">Nucleotide-binding</keyword>
<keyword id="KW-1185">Reference proteome</keyword>
<organism>
    <name type="scientific">Escherichia coli O6:H1 (strain CFT073 / ATCC 700928 / UPEC)</name>
    <dbReference type="NCBI Taxonomy" id="199310"/>
    <lineage>
        <taxon>Bacteria</taxon>
        <taxon>Pseudomonadati</taxon>
        <taxon>Pseudomonadota</taxon>
        <taxon>Gammaproteobacteria</taxon>
        <taxon>Enterobacterales</taxon>
        <taxon>Enterobacteriaceae</taxon>
        <taxon>Escherichia</taxon>
    </lineage>
</organism>
<name>DING_ECOL6</name>
<sequence length="716" mass="81441">MALTAALKAQIAAWYKALQEQIPDFIPRAPQRQMIADVAKTLAGEEGRHLAIEAPTGVGKTLSYLIPGIAIAREEQKTLVVSTANVALQDQIYSKDLPLLKKIIPDLKFTAAFGRGRYVCPRNLTALASTEPTQQDLLAFLDDELTPNNQEEQKRCAKLKGDLDTYKWDGLRDHTDIAIDDDLWRRLSTDKASCLNRNCYYYRECPFFVARREIQEAEVVVANHALVMAAMESEAVLPDPKNLLLVLDEGHHLPDVARDALEMSAEITAPWYRLQLDLFTKLVATCMEQFRPKTIPPLAIPERLNAHCEELYELIASLNNILNLYMPAGQEAEHRFAMGELPDEVLEICQRLAKLTEMLRGLAELFLNDLSEKTGSHDIVRLHRLILQMNRALGMFEAQSKLWRLASLAQSSGAPVTKWATREEREGQLHLWFHCVGIRVSDQLERLLWRSIPHIIVTSATLRSLNSFSRLQEMSGLKEKAGDRFVALDSPFNHCEQGKIVIPRMRVEPSIDNEEQHIAEMAAFFREQVESKKHLGMLVLFASGRAMQRFLDYVTDLRLMLLVQGDQPRYRLVELHRKRVANGERSVLVGLQSFAEGLDLKGDLLSQVHIHKIAFPPIDSPVVITEGEWLKSLNRYPFEVQSLPSASFNLIQQVGRLIRSHGCWGEVVIYDKRLLTKNYGKRLLDALPVFPIEQPEVPEGIVKKKEKTKSPRRRRR</sequence>
<dbReference type="EC" id="5.6.2.3" evidence="1"/>
<dbReference type="EMBL" id="AE014075">
    <property type="protein sequence ID" value="AAN79356.1"/>
    <property type="molecule type" value="Genomic_DNA"/>
</dbReference>
<dbReference type="RefSeq" id="WP_001218658.1">
    <property type="nucleotide sequence ID" value="NZ_CP051263.1"/>
</dbReference>
<dbReference type="SMR" id="Q8FJN1"/>
<dbReference type="STRING" id="199310.c0883"/>
<dbReference type="GeneID" id="75056660"/>
<dbReference type="KEGG" id="ecc:c0883"/>
<dbReference type="eggNOG" id="COG1199">
    <property type="taxonomic scope" value="Bacteria"/>
</dbReference>
<dbReference type="HOGENOM" id="CLU_012117_4_1_6"/>
<dbReference type="BioCyc" id="ECOL199310:C0883-MONOMER"/>
<dbReference type="Proteomes" id="UP000001410">
    <property type="component" value="Chromosome"/>
</dbReference>
<dbReference type="GO" id="GO:0051539">
    <property type="term" value="F:4 iron, 4 sulfur cluster binding"/>
    <property type="evidence" value="ECO:0007669"/>
    <property type="project" value="UniProtKB-UniRule"/>
</dbReference>
<dbReference type="GO" id="GO:0043139">
    <property type="term" value="F:5'-3' DNA helicase activity"/>
    <property type="evidence" value="ECO:0007669"/>
    <property type="project" value="UniProtKB-UniRule"/>
</dbReference>
<dbReference type="GO" id="GO:0005524">
    <property type="term" value="F:ATP binding"/>
    <property type="evidence" value="ECO:0007669"/>
    <property type="project" value="UniProtKB-UniRule"/>
</dbReference>
<dbReference type="GO" id="GO:0016887">
    <property type="term" value="F:ATP hydrolysis activity"/>
    <property type="evidence" value="ECO:0007669"/>
    <property type="project" value="RHEA"/>
</dbReference>
<dbReference type="GO" id="GO:0003677">
    <property type="term" value="F:DNA binding"/>
    <property type="evidence" value="ECO:0007669"/>
    <property type="project" value="UniProtKB-UniRule"/>
</dbReference>
<dbReference type="GO" id="GO:0033677">
    <property type="term" value="F:DNA/RNA helicase activity"/>
    <property type="evidence" value="ECO:0007669"/>
    <property type="project" value="TreeGrafter"/>
</dbReference>
<dbReference type="GO" id="GO:0046872">
    <property type="term" value="F:metal ion binding"/>
    <property type="evidence" value="ECO:0007669"/>
    <property type="project" value="UniProtKB-KW"/>
</dbReference>
<dbReference type="GO" id="GO:0006281">
    <property type="term" value="P:DNA repair"/>
    <property type="evidence" value="ECO:0007669"/>
    <property type="project" value="TreeGrafter"/>
</dbReference>
<dbReference type="GO" id="GO:0009432">
    <property type="term" value="P:SOS response"/>
    <property type="evidence" value="ECO:0007669"/>
    <property type="project" value="TreeGrafter"/>
</dbReference>
<dbReference type="FunFam" id="3.40.50.300:FF:000685">
    <property type="entry name" value="ATP-dependent DNA helicase DinG"/>
    <property type="match status" value="1"/>
</dbReference>
<dbReference type="FunFam" id="3.40.50.300:FF:000700">
    <property type="entry name" value="ATP-dependent DNA helicase DinG"/>
    <property type="match status" value="1"/>
</dbReference>
<dbReference type="Gene3D" id="3.40.50.300">
    <property type="entry name" value="P-loop containing nucleotide triphosphate hydrolases"/>
    <property type="match status" value="2"/>
</dbReference>
<dbReference type="HAMAP" id="MF_02205">
    <property type="entry name" value="DinG_proteobact"/>
    <property type="match status" value="1"/>
</dbReference>
<dbReference type="InterPro" id="IPR006555">
    <property type="entry name" value="ATP-dep_Helicase_C"/>
</dbReference>
<dbReference type="InterPro" id="IPR011545">
    <property type="entry name" value="DEAD/DEAH_box_helicase_dom"/>
</dbReference>
<dbReference type="InterPro" id="IPR045028">
    <property type="entry name" value="DinG/Rad3-like"/>
</dbReference>
<dbReference type="InterPro" id="IPR039000">
    <property type="entry name" value="DinG_proteobact"/>
</dbReference>
<dbReference type="InterPro" id="IPR014013">
    <property type="entry name" value="Helic_SF1/SF2_ATP-bd_DinG/Rad3"/>
</dbReference>
<dbReference type="InterPro" id="IPR006554">
    <property type="entry name" value="Helicase-like_DEXD_c2"/>
</dbReference>
<dbReference type="InterPro" id="IPR014001">
    <property type="entry name" value="Helicase_ATP-bd"/>
</dbReference>
<dbReference type="InterPro" id="IPR027417">
    <property type="entry name" value="P-loop_NTPase"/>
</dbReference>
<dbReference type="InterPro" id="IPR010614">
    <property type="entry name" value="RAD3-like_helicase_DEAD"/>
</dbReference>
<dbReference type="NCBIfam" id="NF008729">
    <property type="entry name" value="PRK11747.1"/>
    <property type="match status" value="1"/>
</dbReference>
<dbReference type="PANTHER" id="PTHR11472:SF59">
    <property type="entry name" value="ATP-DEPENDENT DNA HELICASE DING"/>
    <property type="match status" value="1"/>
</dbReference>
<dbReference type="PANTHER" id="PTHR11472">
    <property type="entry name" value="DNA REPAIR DEAD HELICASE RAD3/XP-D SUBFAMILY MEMBER"/>
    <property type="match status" value="1"/>
</dbReference>
<dbReference type="Pfam" id="PF00270">
    <property type="entry name" value="DEAD"/>
    <property type="match status" value="1"/>
</dbReference>
<dbReference type="Pfam" id="PF06733">
    <property type="entry name" value="DEAD_2"/>
    <property type="match status" value="1"/>
</dbReference>
<dbReference type="Pfam" id="PF13307">
    <property type="entry name" value="Helicase_C_2"/>
    <property type="match status" value="1"/>
</dbReference>
<dbReference type="SMART" id="SM00487">
    <property type="entry name" value="DEXDc"/>
    <property type="match status" value="1"/>
</dbReference>
<dbReference type="SMART" id="SM00488">
    <property type="entry name" value="DEXDc2"/>
    <property type="match status" value="1"/>
</dbReference>
<dbReference type="SMART" id="SM00491">
    <property type="entry name" value="HELICc2"/>
    <property type="match status" value="1"/>
</dbReference>
<dbReference type="SUPFAM" id="SSF52540">
    <property type="entry name" value="P-loop containing nucleoside triphosphate hydrolases"/>
    <property type="match status" value="1"/>
</dbReference>
<dbReference type="PROSITE" id="PS51193">
    <property type="entry name" value="HELICASE_ATP_BIND_2"/>
    <property type="match status" value="1"/>
</dbReference>
<dbReference type="PROSITE" id="PS51194">
    <property type="entry name" value="HELICASE_CTER"/>
    <property type="match status" value="1"/>
</dbReference>
<comment type="function">
    <text evidence="1">DNA-dependent ATPase and 5'-3' DNA helicase. Unwinds D-loops, R-loops, forked DNA and G-quadruplex DNA.</text>
</comment>
<comment type="catalytic activity">
    <reaction evidence="1">
        <text>Couples ATP hydrolysis with the unwinding of duplex DNA at the replication fork by translocating in the 5'-3' direction. This creates two antiparallel DNA single strands (ssDNA). The leading ssDNA polymer is the template for DNA polymerase III holoenzyme which synthesizes a continuous strand.</text>
        <dbReference type="EC" id="5.6.2.3"/>
    </reaction>
</comment>
<comment type="catalytic activity">
    <reaction evidence="1">
        <text>ATP + H2O = ADP + phosphate + H(+)</text>
        <dbReference type="Rhea" id="RHEA:13065"/>
        <dbReference type="ChEBI" id="CHEBI:15377"/>
        <dbReference type="ChEBI" id="CHEBI:15378"/>
        <dbReference type="ChEBI" id="CHEBI:30616"/>
        <dbReference type="ChEBI" id="CHEBI:43474"/>
        <dbReference type="ChEBI" id="CHEBI:456216"/>
        <dbReference type="EC" id="5.6.2.3"/>
    </reaction>
</comment>
<comment type="cofactor">
    <cofactor evidence="1">
        <name>[4Fe-4S] cluster</name>
        <dbReference type="ChEBI" id="CHEBI:49883"/>
    </cofactor>
    <text evidence="1">Binds 1 [4Fe-4S] cluster.</text>
</comment>
<comment type="similarity">
    <text evidence="1">Belongs to the helicase family. DinG subfamily. Type 1 sub-subfamily.</text>
</comment>
<feature type="chain" id="PRO_0000101998" description="ATP-dependent DNA helicase DinG">
    <location>
        <begin position="1"/>
        <end position="716"/>
    </location>
</feature>
<feature type="domain" description="Helicase ATP-binding" evidence="1">
    <location>
        <begin position="17"/>
        <end position="294"/>
    </location>
</feature>
<feature type="domain" description="Helicase C-terminal" evidence="1">
    <location>
        <begin position="517"/>
        <end position="698"/>
    </location>
</feature>
<feature type="short sequence motif" description="DEAH box" evidence="1">
    <location>
        <begin position="131"/>
        <end position="134"/>
    </location>
</feature>
<feature type="short sequence motif" description="DEAH box" evidence="1">
    <location>
        <begin position="248"/>
        <end position="251"/>
    </location>
</feature>
<feature type="binding site" evidence="1 2">
    <location>
        <begin position="54"/>
        <end position="61"/>
    </location>
    <ligand>
        <name>ATP</name>
        <dbReference type="ChEBI" id="CHEBI:30616"/>
    </ligand>
</feature>
<feature type="binding site" evidence="1">
    <location>
        <position position="120"/>
    </location>
    <ligand>
        <name>[4Fe-4S] cluster</name>
        <dbReference type="ChEBI" id="CHEBI:49883"/>
    </ligand>
</feature>
<feature type="binding site" evidence="1">
    <location>
        <position position="194"/>
    </location>
    <ligand>
        <name>[4Fe-4S] cluster</name>
        <dbReference type="ChEBI" id="CHEBI:49883"/>
    </ligand>
</feature>
<feature type="binding site" evidence="1">
    <location>
        <position position="199"/>
    </location>
    <ligand>
        <name>[4Fe-4S] cluster</name>
        <dbReference type="ChEBI" id="CHEBI:49883"/>
    </ligand>
</feature>
<feature type="binding site" evidence="1">
    <location>
        <position position="205"/>
    </location>
    <ligand>
        <name>[4Fe-4S] cluster</name>
        <dbReference type="ChEBI" id="CHEBI:49883"/>
    </ligand>
</feature>
<accession>Q8FJN1</accession>
<proteinExistence type="inferred from homology"/>
<evidence type="ECO:0000255" key="1">
    <source>
        <dbReference type="HAMAP-Rule" id="MF_02205"/>
    </source>
</evidence>
<evidence type="ECO:0000305" key="2"/>
<protein>
    <recommendedName>
        <fullName evidence="1">ATP-dependent DNA helicase DinG</fullName>
        <ecNumber evidence="1">5.6.2.3</ecNumber>
    </recommendedName>
    <alternativeName>
        <fullName evidence="1">DNA 5'-3' helicase subunit DinG</fullName>
    </alternativeName>
</protein>